<name>SFSA_SHESA</name>
<sequence>MHFSPALKSGKLLKRYKRFLADIQLEDGTEITLHCPNTGSMRNCLFPGETVWFSTSNNPKRKYAHTWELMTTPTGGLIGIHSGNANALVEEALNKGVITELVGYDSLSREVKYGDENSRIDILLEAAQKPACYIEVKSCTLLEDGQGYFPDAVSLRGQKHLRELMHMASLGHRAVLLFVVQHTDIHSVAPAAHIDPEYANLLKKAVLSGVEVLAYRCEISASEIHLAHACPVRV</sequence>
<reference key="1">
    <citation type="submission" date="2006-09" db="EMBL/GenBank/DDBJ databases">
        <title>Complete sequence of chromosome 1 of Shewanella sp. ANA-3.</title>
        <authorList>
            <person name="Copeland A."/>
            <person name="Lucas S."/>
            <person name="Lapidus A."/>
            <person name="Barry K."/>
            <person name="Detter J.C."/>
            <person name="Glavina del Rio T."/>
            <person name="Hammon N."/>
            <person name="Israni S."/>
            <person name="Dalin E."/>
            <person name="Tice H."/>
            <person name="Pitluck S."/>
            <person name="Chertkov O."/>
            <person name="Brettin T."/>
            <person name="Bruce D."/>
            <person name="Han C."/>
            <person name="Tapia R."/>
            <person name="Gilna P."/>
            <person name="Schmutz J."/>
            <person name="Larimer F."/>
            <person name="Land M."/>
            <person name="Hauser L."/>
            <person name="Kyrpides N."/>
            <person name="Kim E."/>
            <person name="Newman D."/>
            <person name="Salticov C."/>
            <person name="Konstantinidis K."/>
            <person name="Klappenback J."/>
            <person name="Tiedje J."/>
            <person name="Richardson P."/>
        </authorList>
    </citation>
    <scope>NUCLEOTIDE SEQUENCE [LARGE SCALE GENOMIC DNA]</scope>
    <source>
        <strain>ANA-3</strain>
    </source>
</reference>
<protein>
    <recommendedName>
        <fullName evidence="1">Sugar fermentation stimulation protein homolog</fullName>
    </recommendedName>
</protein>
<dbReference type="EMBL" id="CP000469">
    <property type="protein sequence ID" value="ABK49626.1"/>
    <property type="molecule type" value="Genomic_DNA"/>
</dbReference>
<dbReference type="RefSeq" id="WP_011718197.1">
    <property type="nucleotide sequence ID" value="NC_008577.1"/>
</dbReference>
<dbReference type="SMR" id="A0L0Q7"/>
<dbReference type="STRING" id="94122.Shewana3_3403"/>
<dbReference type="KEGG" id="shn:Shewana3_3403"/>
<dbReference type="eggNOG" id="COG1489">
    <property type="taxonomic scope" value="Bacteria"/>
</dbReference>
<dbReference type="HOGENOM" id="CLU_052299_2_0_6"/>
<dbReference type="OrthoDB" id="9802365at2"/>
<dbReference type="Proteomes" id="UP000002589">
    <property type="component" value="Chromosome"/>
</dbReference>
<dbReference type="GO" id="GO:0003677">
    <property type="term" value="F:DNA binding"/>
    <property type="evidence" value="ECO:0007669"/>
    <property type="project" value="InterPro"/>
</dbReference>
<dbReference type="CDD" id="cd22359">
    <property type="entry name" value="SfsA-like_bacterial"/>
    <property type="match status" value="1"/>
</dbReference>
<dbReference type="FunFam" id="2.40.50.580:FF:000001">
    <property type="entry name" value="Sugar fermentation stimulation protein A"/>
    <property type="match status" value="1"/>
</dbReference>
<dbReference type="FunFam" id="3.40.1350.60:FF:000001">
    <property type="entry name" value="Sugar fermentation stimulation protein A"/>
    <property type="match status" value="1"/>
</dbReference>
<dbReference type="Gene3D" id="2.40.50.580">
    <property type="match status" value="1"/>
</dbReference>
<dbReference type="Gene3D" id="3.40.1350.60">
    <property type="match status" value="1"/>
</dbReference>
<dbReference type="HAMAP" id="MF_00095">
    <property type="entry name" value="SfsA"/>
    <property type="match status" value="1"/>
</dbReference>
<dbReference type="InterPro" id="IPR005224">
    <property type="entry name" value="SfsA"/>
</dbReference>
<dbReference type="InterPro" id="IPR040452">
    <property type="entry name" value="SfsA_C"/>
</dbReference>
<dbReference type="InterPro" id="IPR041465">
    <property type="entry name" value="SfsA_N"/>
</dbReference>
<dbReference type="NCBIfam" id="TIGR00230">
    <property type="entry name" value="sfsA"/>
    <property type="match status" value="1"/>
</dbReference>
<dbReference type="PANTHER" id="PTHR30545">
    <property type="entry name" value="SUGAR FERMENTATION STIMULATION PROTEIN A"/>
    <property type="match status" value="1"/>
</dbReference>
<dbReference type="PANTHER" id="PTHR30545:SF2">
    <property type="entry name" value="SUGAR FERMENTATION STIMULATION PROTEIN A"/>
    <property type="match status" value="1"/>
</dbReference>
<dbReference type="Pfam" id="PF03749">
    <property type="entry name" value="SfsA"/>
    <property type="match status" value="1"/>
</dbReference>
<dbReference type="Pfam" id="PF17746">
    <property type="entry name" value="SfsA_N"/>
    <property type="match status" value="1"/>
</dbReference>
<evidence type="ECO:0000255" key="1">
    <source>
        <dbReference type="HAMAP-Rule" id="MF_00095"/>
    </source>
</evidence>
<accession>A0L0Q7</accession>
<organism>
    <name type="scientific">Shewanella sp. (strain ANA-3)</name>
    <dbReference type="NCBI Taxonomy" id="94122"/>
    <lineage>
        <taxon>Bacteria</taxon>
        <taxon>Pseudomonadati</taxon>
        <taxon>Pseudomonadota</taxon>
        <taxon>Gammaproteobacteria</taxon>
        <taxon>Alteromonadales</taxon>
        <taxon>Shewanellaceae</taxon>
        <taxon>Shewanella</taxon>
    </lineage>
</organism>
<proteinExistence type="inferred from homology"/>
<feature type="chain" id="PRO_1000008028" description="Sugar fermentation stimulation protein homolog">
    <location>
        <begin position="1"/>
        <end position="234"/>
    </location>
</feature>
<gene>
    <name evidence="1" type="primary">sfsA</name>
    <name type="ordered locus">Shewana3_3403</name>
</gene>
<comment type="similarity">
    <text evidence="1">Belongs to the SfsA family.</text>
</comment>